<proteinExistence type="evidence at transcript level"/>
<reference key="1">
    <citation type="submission" date="2001-06" db="EMBL/GenBank/DDBJ databases">
        <title>Identification of geographic variations and cloning of venom proteins of Trimeresurus stejnegeri: serine proteases and phospholipases.</title>
        <authorList>
            <person name="Tsai I.-H."/>
            <person name="Wang Y.-M."/>
        </authorList>
    </citation>
    <scope>NUCLEOTIDE SEQUENCE [MRNA]</scope>
    <source>
        <tissue>Venom gland</tissue>
    </source>
</reference>
<comment type="function">
    <text evidence="1">Snake venom serine protease that may act in the hemostasis system of the prey.</text>
</comment>
<comment type="subunit">
    <text evidence="1">Monomer.</text>
</comment>
<comment type="subcellular location">
    <subcellularLocation>
        <location evidence="1">Secreted</location>
    </subcellularLocation>
</comment>
<comment type="tissue specificity">
    <text>Expressed by the venom gland.</text>
</comment>
<comment type="similarity">
    <text evidence="3">Belongs to the peptidase S1 family. Snake venom subfamily.</text>
</comment>
<accession>Q71QJ1</accession>
<name>VSP09_TRIST</name>
<dbReference type="EC" id="3.4.21.-"/>
<dbReference type="EMBL" id="AF395766">
    <property type="protein sequence ID" value="AAQ02896.1"/>
    <property type="molecule type" value="mRNA"/>
</dbReference>
<dbReference type="SMR" id="Q71QJ1"/>
<dbReference type="MEROPS" id="S01.497"/>
<dbReference type="GO" id="GO:0005576">
    <property type="term" value="C:extracellular region"/>
    <property type="evidence" value="ECO:0007669"/>
    <property type="project" value="UniProtKB-SubCell"/>
</dbReference>
<dbReference type="GO" id="GO:0030141">
    <property type="term" value="C:secretory granule"/>
    <property type="evidence" value="ECO:0007669"/>
    <property type="project" value="TreeGrafter"/>
</dbReference>
<dbReference type="GO" id="GO:0004252">
    <property type="term" value="F:serine-type endopeptidase activity"/>
    <property type="evidence" value="ECO:0007669"/>
    <property type="project" value="InterPro"/>
</dbReference>
<dbReference type="GO" id="GO:0090729">
    <property type="term" value="F:toxin activity"/>
    <property type="evidence" value="ECO:0007669"/>
    <property type="project" value="UniProtKB-KW"/>
</dbReference>
<dbReference type="GO" id="GO:0006508">
    <property type="term" value="P:proteolysis"/>
    <property type="evidence" value="ECO:0007669"/>
    <property type="project" value="UniProtKB-KW"/>
</dbReference>
<dbReference type="CDD" id="cd00190">
    <property type="entry name" value="Tryp_SPc"/>
    <property type="match status" value="1"/>
</dbReference>
<dbReference type="FunFam" id="2.40.10.10:FF:000158">
    <property type="entry name" value="Thrombin-like enzyme saxthrombin"/>
    <property type="match status" value="1"/>
</dbReference>
<dbReference type="FunFam" id="2.40.10.10:FF:000153">
    <property type="entry name" value="Venom plasminogen activator TSV-PA"/>
    <property type="match status" value="1"/>
</dbReference>
<dbReference type="Gene3D" id="2.40.10.10">
    <property type="entry name" value="Trypsin-like serine proteases"/>
    <property type="match status" value="2"/>
</dbReference>
<dbReference type="InterPro" id="IPR009003">
    <property type="entry name" value="Peptidase_S1_PA"/>
</dbReference>
<dbReference type="InterPro" id="IPR043504">
    <property type="entry name" value="Peptidase_S1_PA_chymotrypsin"/>
</dbReference>
<dbReference type="InterPro" id="IPR001314">
    <property type="entry name" value="Peptidase_S1A"/>
</dbReference>
<dbReference type="InterPro" id="IPR001254">
    <property type="entry name" value="Trypsin_dom"/>
</dbReference>
<dbReference type="InterPro" id="IPR018114">
    <property type="entry name" value="TRYPSIN_HIS"/>
</dbReference>
<dbReference type="InterPro" id="IPR033116">
    <property type="entry name" value="TRYPSIN_SER"/>
</dbReference>
<dbReference type="PANTHER" id="PTHR24271:SF47">
    <property type="entry name" value="KALLIKREIN-1"/>
    <property type="match status" value="1"/>
</dbReference>
<dbReference type="PANTHER" id="PTHR24271">
    <property type="entry name" value="KALLIKREIN-RELATED"/>
    <property type="match status" value="1"/>
</dbReference>
<dbReference type="Pfam" id="PF00089">
    <property type="entry name" value="Trypsin"/>
    <property type="match status" value="1"/>
</dbReference>
<dbReference type="PRINTS" id="PR00722">
    <property type="entry name" value="CHYMOTRYPSIN"/>
</dbReference>
<dbReference type="SMART" id="SM00020">
    <property type="entry name" value="Tryp_SPc"/>
    <property type="match status" value="1"/>
</dbReference>
<dbReference type="SUPFAM" id="SSF50494">
    <property type="entry name" value="Trypsin-like serine proteases"/>
    <property type="match status" value="1"/>
</dbReference>
<dbReference type="PROSITE" id="PS50240">
    <property type="entry name" value="TRYPSIN_DOM"/>
    <property type="match status" value="1"/>
</dbReference>
<dbReference type="PROSITE" id="PS00134">
    <property type="entry name" value="TRYPSIN_HIS"/>
    <property type="match status" value="1"/>
</dbReference>
<dbReference type="PROSITE" id="PS00135">
    <property type="entry name" value="TRYPSIN_SER"/>
    <property type="match status" value="1"/>
</dbReference>
<keyword id="KW-1015">Disulfide bond</keyword>
<keyword id="KW-0325">Glycoprotein</keyword>
<keyword id="KW-1199">Hemostasis impairing toxin</keyword>
<keyword id="KW-0378">Hydrolase</keyword>
<keyword id="KW-0645">Protease</keyword>
<keyword id="KW-0964">Secreted</keyword>
<keyword id="KW-0720">Serine protease</keyword>
<keyword id="KW-0732">Signal</keyword>
<keyword id="KW-0800">Toxin</keyword>
<keyword id="KW-0865">Zymogen</keyword>
<feature type="signal peptide" evidence="2">
    <location>
        <begin position="1"/>
        <end position="18"/>
    </location>
</feature>
<feature type="propeptide" id="PRO_0000295834" evidence="1">
    <location>
        <begin position="19"/>
        <end position="24"/>
    </location>
</feature>
<feature type="chain" id="PRO_5000061218" description="Snake venom serine protease KN9">
    <location>
        <begin position="25"/>
        <end position="257"/>
    </location>
</feature>
<feature type="domain" description="Peptidase S1" evidence="3">
    <location>
        <begin position="25"/>
        <end position="248"/>
    </location>
</feature>
<feature type="active site" description="Charge relay system" evidence="1">
    <location>
        <position position="64"/>
    </location>
</feature>
<feature type="active site" description="Charge relay system" evidence="1">
    <location>
        <position position="109"/>
    </location>
</feature>
<feature type="active site" description="Charge relay system" evidence="1">
    <location>
        <position position="203"/>
    </location>
</feature>
<feature type="glycosylation site" description="N-linked (GlcNAc...) asparagine" evidence="2">
    <location>
        <position position="102"/>
    </location>
</feature>
<feature type="glycosylation site" description="N-linked (GlcNAc...) asparagine" evidence="2">
    <location>
        <position position="120"/>
    </location>
</feature>
<feature type="glycosylation site" description="N-linked (GlcNAc...) asparagine" evidence="2">
    <location>
        <position position="121"/>
    </location>
</feature>
<feature type="disulfide bond" evidence="3">
    <location>
        <begin position="31"/>
        <end position="162"/>
    </location>
</feature>
<feature type="disulfide bond" evidence="3">
    <location>
        <begin position="49"/>
        <end position="65"/>
    </location>
</feature>
<feature type="disulfide bond" evidence="3">
    <location>
        <begin position="141"/>
        <end position="209"/>
    </location>
</feature>
<feature type="disulfide bond" evidence="3">
    <location>
        <begin position="173"/>
        <end position="188"/>
    </location>
</feature>
<feature type="disulfide bond" evidence="3">
    <location>
        <begin position="199"/>
        <end position="224"/>
    </location>
</feature>
<evidence type="ECO:0000250" key="1"/>
<evidence type="ECO:0000255" key="2"/>
<evidence type="ECO:0000255" key="3">
    <source>
        <dbReference type="PROSITE-ProRule" id="PRU00274"/>
    </source>
</evidence>
<sequence length="257" mass="28168">MVLIRVLANLLILQLSYAQKSSELVVGGDECNINEHRFLVLVYTDGIQCGGTLINKEWMLTAAHCDGKKMKLQFGLHSKNVPNKDKQTRVPKKKYFFPCSKNFTKWDKDIMLIRLNHPVNNSTHIAPLSLPSKPPSQDTVCNIMGWGTISPTKEIYPDVPHCANINIVDHAVCRAFYPGLLEKSKTLCAGILEGGKDICQGDSGGPLICNGQIQGIVSVGGNPCAEPRVPAIYTKVFDHLDWIKSIIAGNTAATCPL</sequence>
<protein>
    <recommendedName>
        <fullName>Snake venom serine protease KN9</fullName>
        <shortName>SVSP</shortName>
        <ecNumber>3.4.21.-</ecNumber>
    </recommendedName>
</protein>
<organism>
    <name type="scientific">Trimeresurus stejnegeri</name>
    <name type="common">Chinese green tree viper</name>
    <name type="synonym">Viridovipera stejnegeri</name>
    <dbReference type="NCBI Taxonomy" id="39682"/>
    <lineage>
        <taxon>Eukaryota</taxon>
        <taxon>Metazoa</taxon>
        <taxon>Chordata</taxon>
        <taxon>Craniata</taxon>
        <taxon>Vertebrata</taxon>
        <taxon>Euteleostomi</taxon>
        <taxon>Lepidosauria</taxon>
        <taxon>Squamata</taxon>
        <taxon>Bifurcata</taxon>
        <taxon>Unidentata</taxon>
        <taxon>Episquamata</taxon>
        <taxon>Toxicofera</taxon>
        <taxon>Serpentes</taxon>
        <taxon>Colubroidea</taxon>
        <taxon>Viperidae</taxon>
        <taxon>Crotalinae</taxon>
        <taxon>Trimeresurus</taxon>
    </lineage>
</organism>